<proteinExistence type="evidence at transcript level"/>
<reference key="1">
    <citation type="journal article" date="2005" name="Genome Biol.">
        <title>Full-length cDNAs from chicken bursal lymphocytes to facilitate gene function analysis.</title>
        <authorList>
            <person name="Caldwell R.B."/>
            <person name="Kierzek A.M."/>
            <person name="Arakawa H."/>
            <person name="Bezzubov Y."/>
            <person name="Zaim J."/>
            <person name="Fiedler P."/>
            <person name="Kutter S."/>
            <person name="Blagodatski A."/>
            <person name="Kostovska D."/>
            <person name="Koter M."/>
            <person name="Plachy J."/>
            <person name="Carninci P."/>
            <person name="Hayashizaki Y."/>
            <person name="Buerstedde J.-M."/>
        </authorList>
    </citation>
    <scope>NUCLEOTIDE SEQUENCE [LARGE SCALE MRNA]</scope>
    <source>
        <strain>CB</strain>
        <tissue>Bursa of Fabricius</tissue>
    </source>
</reference>
<organism>
    <name type="scientific">Gallus gallus</name>
    <name type="common">Chicken</name>
    <dbReference type="NCBI Taxonomy" id="9031"/>
    <lineage>
        <taxon>Eukaryota</taxon>
        <taxon>Metazoa</taxon>
        <taxon>Chordata</taxon>
        <taxon>Craniata</taxon>
        <taxon>Vertebrata</taxon>
        <taxon>Euteleostomi</taxon>
        <taxon>Archelosauria</taxon>
        <taxon>Archosauria</taxon>
        <taxon>Dinosauria</taxon>
        <taxon>Saurischia</taxon>
        <taxon>Theropoda</taxon>
        <taxon>Coelurosauria</taxon>
        <taxon>Aves</taxon>
        <taxon>Neognathae</taxon>
        <taxon>Galloanserae</taxon>
        <taxon>Galliformes</taxon>
        <taxon>Phasianidae</taxon>
        <taxon>Phasianinae</taxon>
        <taxon>Gallus</taxon>
    </lineage>
</organism>
<comment type="function">
    <text evidence="2">Substrate-specific adapter of a DCX (DDB1-CUL4-X-box) E3 ubiquitin-protein ligase complex required for cell cycle control, DNA damage response and translesion DNA synthesis. The DCX(DTL) complex, also named CRL4(CDT2) complex, mediates the polyubiquitination and subsequent degradation of CDT1, CDKN1A/p21(CIP1), KMT5A and SDE2. CDT1 degradation in response to DNA damage is necessary to ensure proper cell cycle regulation of DNA replication. CDKN1A/p21(CIP1) degradation during S phase or following UV irradiation is essential to control replication licensing. KMT5A degradation is also important for a proper regulation of mechanisms such as TGF-beta signaling, cell cycle progression, DNA repair and cell migration. Most substrates require their interaction with PCNA for their polyubiquitination: substrates interact with PCNA via their PIP-box, and those containing the 'K+4' motif in the PIP box, recruit the DCX(DTL) complex, leading to their degradation. In undamaged proliferating cells, the DCX(DTL) complex also promotes the 'Lys-164' monoubiquitination of PCNA, thereby being involved in PCNA-dependent translesion DNA synthesis (By similarity). May play a role in the regulation of the circadian clock (By similarity).</text>
</comment>
<comment type="pathway">
    <text>Protein modification; protein ubiquitination.</text>
</comment>
<comment type="subunit">
    <text evidence="2">Component of the DCX(DTL) E3 ubiquitin ligase complex, at least composed of CUL4 (CUL4A or CUL4B), DDB1, DTL/CDT2 and RBX1.</text>
</comment>
<comment type="subcellular location">
    <subcellularLocation>
        <location evidence="2">Nucleus</location>
    </subcellularLocation>
    <subcellularLocation>
        <location evidence="1">Cytoplasm</location>
        <location evidence="1">Cytoskeleton</location>
        <location evidence="1">Microtubule organizing center</location>
        <location evidence="1">Centrosome</location>
    </subcellularLocation>
    <subcellularLocation>
        <location evidence="1">Chromosome</location>
    </subcellularLocation>
</comment>
<comment type="similarity">
    <text evidence="5">Belongs to the WD repeat cdt2 family.</text>
</comment>
<gene>
    <name type="primary">DTL</name>
    <name type="synonym">CDT2</name>
    <name type="ORF">RCJMB04_15a2</name>
</gene>
<protein>
    <recommendedName>
        <fullName>Denticleless protein homolog</fullName>
    </recommendedName>
</protein>
<accession>Q5ZJW8</accession>
<sequence length="720" mass="78633">MLCRALLLRAAGHRQSSSLPLQHLLDGYRCSREDDHLSYGEIGMPVPPFGCSFSAAPNFEHVLAVANEEGFVRLYDTEAQNTTKLISKEWQAHSNAVFDLAWVPGEHRIVTASGDQTAKVWDVRAGELLGICKGHQCSLKSVAFSRFEKAVFCTGGRDGNIMVWDTRCNKKDGFYRQVNQISGAHNVVDRQTPSKLRKKRQNLRGLAPLVDFQQSVTVVLLQDEHTLISAGAVDGVIKVWDLRKNYAAYRQDPVPSKSFFYPGTSTRKLGYSSLVLDSTGANLFANCTDDSIYMFNMTSLKTFPVAVFSGHQNSTFYIKSSISPDDQFLVSGSSDCNAYIWKVSEPSLPPRILVGHSQEVTSIAWCPSDFTKIATCSDDNTVRIWRLQHYPEEEKSVSNKAKLVGWVTQKKPEEQRGAGRSASPQSTPAKAFSVGSPCASSPRPAACAPSYSGDLPLSTNTPTVSLKTQMATACTPAKLSGASPRTSPKLVPSSKMSIKHWIARTPCSSPEVGKKTPSPRKALAEVTQSLLETSSTPKAQHSQAEKRAKRRLDCSKEDEAGQKCLQDCSCVTELDHVAKKSKLNLCHLAAGQRACDEGSLSLADLDNEHEDSTHSPKELSFPGSLVNPSGTQTPPPVLQSPCERDSDVVDKENSSPERKNWLSALGEKLRTGKAGSPPSSYTSSAKRQEAAVVTTSPKTAVNTSVSMRKICTYFHRKPQN</sequence>
<evidence type="ECO:0000250" key="1"/>
<evidence type="ECO:0000250" key="2">
    <source>
        <dbReference type="UniProtKB" id="Q9NZJ0"/>
    </source>
</evidence>
<evidence type="ECO:0000255" key="3"/>
<evidence type="ECO:0000256" key="4">
    <source>
        <dbReference type="SAM" id="MobiDB-lite"/>
    </source>
</evidence>
<evidence type="ECO:0000305" key="5"/>
<keyword id="KW-0090">Biological rhythms</keyword>
<keyword id="KW-0158">Chromosome</keyword>
<keyword id="KW-0963">Cytoplasm</keyword>
<keyword id="KW-0206">Cytoskeleton</keyword>
<keyword id="KW-0227">DNA damage</keyword>
<keyword id="KW-0235">DNA replication</keyword>
<keyword id="KW-0539">Nucleus</keyword>
<keyword id="KW-1185">Reference proteome</keyword>
<keyword id="KW-0677">Repeat</keyword>
<keyword id="KW-0833">Ubl conjugation pathway</keyword>
<keyword id="KW-0853">WD repeat</keyword>
<feature type="chain" id="PRO_0000274869" description="Denticleless protein homolog">
    <location>
        <begin position="1"/>
        <end position="720"/>
    </location>
</feature>
<feature type="repeat" description="WD 1">
    <location>
        <begin position="43"/>
        <end position="85"/>
    </location>
</feature>
<feature type="repeat" description="WD 2">
    <location>
        <begin position="92"/>
        <end position="131"/>
    </location>
</feature>
<feature type="repeat" description="WD 3">
    <location>
        <begin position="134"/>
        <end position="174"/>
    </location>
</feature>
<feature type="repeat" description="WD 4">
    <location>
        <begin position="211"/>
        <end position="250"/>
    </location>
</feature>
<feature type="repeat" description="WD 5">
    <location>
        <begin position="266"/>
        <end position="305"/>
    </location>
</feature>
<feature type="repeat" description="WD 6">
    <location>
        <begin position="310"/>
        <end position="351"/>
    </location>
</feature>
<feature type="repeat" description="WD 7">
    <location>
        <begin position="355"/>
        <end position="395"/>
    </location>
</feature>
<feature type="region of interest" description="Disordered" evidence="4">
    <location>
        <begin position="411"/>
        <end position="437"/>
    </location>
</feature>
<feature type="region of interest" description="Disordered" evidence="4">
    <location>
        <begin position="476"/>
        <end position="495"/>
    </location>
</feature>
<feature type="region of interest" description="Disordered" evidence="4">
    <location>
        <begin position="528"/>
        <end position="552"/>
    </location>
</feature>
<feature type="region of interest" description="Disordered" evidence="4">
    <location>
        <begin position="607"/>
        <end position="698"/>
    </location>
</feature>
<feature type="short sequence motif" description="DDB1-binding motif" evidence="1">
    <location>
        <begin position="164"/>
        <end position="167"/>
    </location>
</feature>
<feature type="short sequence motif" description="Nuclear localization signal" evidence="3">
    <location>
        <begin position="193"/>
        <end position="200"/>
    </location>
</feature>
<feature type="short sequence motif" description="DDB1-binding motif" evidence="1">
    <location>
        <begin position="240"/>
        <end position="243"/>
    </location>
</feature>
<feature type="compositionally biased region" description="Polar residues" evidence="4">
    <location>
        <begin position="528"/>
        <end position="542"/>
    </location>
</feature>
<feature type="compositionally biased region" description="Basic and acidic residues" evidence="4">
    <location>
        <begin position="543"/>
        <end position="552"/>
    </location>
</feature>
<feature type="compositionally biased region" description="Basic and acidic residues" evidence="4">
    <location>
        <begin position="642"/>
        <end position="660"/>
    </location>
</feature>
<name>DTL_CHICK</name>
<dbReference type="EMBL" id="AJ720316">
    <property type="protein sequence ID" value="CAG31975.1"/>
    <property type="molecule type" value="mRNA"/>
</dbReference>
<dbReference type="RefSeq" id="NP_001026219.1">
    <property type="nucleotide sequence ID" value="NM_001031048.1"/>
</dbReference>
<dbReference type="SMR" id="Q5ZJW8"/>
<dbReference type="FunCoup" id="Q5ZJW8">
    <property type="interactions" value="894"/>
</dbReference>
<dbReference type="STRING" id="9031.ENSGALP00000015973"/>
<dbReference type="GlyGen" id="Q5ZJW8">
    <property type="glycosylation" value="1 site"/>
</dbReference>
<dbReference type="PaxDb" id="9031-ENSGALP00000015973"/>
<dbReference type="GeneID" id="421373"/>
<dbReference type="KEGG" id="gga:421373"/>
<dbReference type="CTD" id="51514"/>
<dbReference type="VEuPathDB" id="HostDB:geneid_421373"/>
<dbReference type="eggNOG" id="KOG0321">
    <property type="taxonomic scope" value="Eukaryota"/>
</dbReference>
<dbReference type="HOGENOM" id="CLU_023407_0_0_1"/>
<dbReference type="InParanoid" id="Q5ZJW8"/>
<dbReference type="OrthoDB" id="2096344at2759"/>
<dbReference type="PhylomeDB" id="Q5ZJW8"/>
<dbReference type="TreeFam" id="TF324483"/>
<dbReference type="Reactome" id="R-GGA-110314">
    <property type="pathway name" value="Recognition of DNA damage by PCNA-containing replication complex"/>
</dbReference>
<dbReference type="Reactome" id="R-GGA-8951664">
    <property type="pathway name" value="Neddylation"/>
</dbReference>
<dbReference type="UniPathway" id="UPA00143"/>
<dbReference type="PRO" id="PR:Q5ZJW8"/>
<dbReference type="Proteomes" id="UP000000539">
    <property type="component" value="Chromosome 3"/>
</dbReference>
<dbReference type="Bgee" id="ENSGALG00000009837">
    <property type="expression patterns" value="Expressed in testis and 5 other cell types or tissues"/>
</dbReference>
<dbReference type="GO" id="GO:0005813">
    <property type="term" value="C:centrosome"/>
    <property type="evidence" value="ECO:0000250"/>
    <property type="project" value="UniProtKB"/>
</dbReference>
<dbReference type="GO" id="GO:0005694">
    <property type="term" value="C:chromosome"/>
    <property type="evidence" value="ECO:0007669"/>
    <property type="project" value="UniProtKB-SubCell"/>
</dbReference>
<dbReference type="GO" id="GO:0031464">
    <property type="term" value="C:Cul4A-RING E3 ubiquitin ligase complex"/>
    <property type="evidence" value="ECO:0000250"/>
    <property type="project" value="UniProtKB"/>
</dbReference>
<dbReference type="GO" id="GO:0031465">
    <property type="term" value="C:Cul4B-RING E3 ubiquitin ligase complex"/>
    <property type="evidence" value="ECO:0000250"/>
    <property type="project" value="UniProtKB"/>
</dbReference>
<dbReference type="GO" id="GO:0005737">
    <property type="term" value="C:cytoplasm"/>
    <property type="evidence" value="ECO:0007669"/>
    <property type="project" value="UniProtKB-KW"/>
</dbReference>
<dbReference type="GO" id="GO:0005634">
    <property type="term" value="C:nucleus"/>
    <property type="evidence" value="ECO:0000250"/>
    <property type="project" value="UniProtKB"/>
</dbReference>
<dbReference type="GO" id="GO:0030674">
    <property type="term" value="F:protein-macromolecule adaptor activity"/>
    <property type="evidence" value="ECO:0000318"/>
    <property type="project" value="GO_Central"/>
</dbReference>
<dbReference type="GO" id="GO:0006974">
    <property type="term" value="P:DNA damage response"/>
    <property type="evidence" value="ECO:0000250"/>
    <property type="project" value="UniProtKB"/>
</dbReference>
<dbReference type="GO" id="GO:0006260">
    <property type="term" value="P:DNA replication"/>
    <property type="evidence" value="ECO:0007669"/>
    <property type="project" value="UniProtKB-KW"/>
</dbReference>
<dbReference type="GO" id="GO:0007095">
    <property type="term" value="P:mitotic G2 DNA damage checkpoint signaling"/>
    <property type="evidence" value="ECO:0000250"/>
    <property type="project" value="UniProtKB"/>
</dbReference>
<dbReference type="GO" id="GO:0043161">
    <property type="term" value="P:proteasome-mediated ubiquitin-dependent protein catabolic process"/>
    <property type="evidence" value="ECO:0000318"/>
    <property type="project" value="GO_Central"/>
</dbReference>
<dbReference type="GO" id="GO:0006513">
    <property type="term" value="P:protein monoubiquitination"/>
    <property type="evidence" value="ECO:0000250"/>
    <property type="project" value="UniProtKB"/>
</dbReference>
<dbReference type="GO" id="GO:0000209">
    <property type="term" value="P:protein polyubiquitination"/>
    <property type="evidence" value="ECO:0000250"/>
    <property type="project" value="UniProtKB"/>
</dbReference>
<dbReference type="GO" id="GO:0051726">
    <property type="term" value="P:regulation of cell cycle"/>
    <property type="evidence" value="ECO:0000250"/>
    <property type="project" value="UniProtKB"/>
</dbReference>
<dbReference type="GO" id="GO:0009411">
    <property type="term" value="P:response to UV"/>
    <property type="evidence" value="ECO:0000250"/>
    <property type="project" value="UniProtKB"/>
</dbReference>
<dbReference type="GO" id="GO:0048511">
    <property type="term" value="P:rhythmic process"/>
    <property type="evidence" value="ECO:0007669"/>
    <property type="project" value="UniProtKB-KW"/>
</dbReference>
<dbReference type="GO" id="GO:0019985">
    <property type="term" value="P:translesion synthesis"/>
    <property type="evidence" value="ECO:0000250"/>
    <property type="project" value="UniProtKB"/>
</dbReference>
<dbReference type="GO" id="GO:0006511">
    <property type="term" value="P:ubiquitin-dependent protein catabolic process"/>
    <property type="evidence" value="ECO:0000250"/>
    <property type="project" value="UniProtKB"/>
</dbReference>
<dbReference type="CDD" id="cd00200">
    <property type="entry name" value="WD40"/>
    <property type="match status" value="1"/>
</dbReference>
<dbReference type="FunFam" id="2.130.10.10:FF:000447">
    <property type="entry name" value="Denticleless protein homolog B"/>
    <property type="match status" value="1"/>
</dbReference>
<dbReference type="FunFam" id="2.130.10.10:FF:000171">
    <property type="entry name" value="denticleless protein homolog isoform X1"/>
    <property type="match status" value="1"/>
</dbReference>
<dbReference type="Gene3D" id="2.130.10.10">
    <property type="entry name" value="YVTN repeat-like/Quinoprotein amine dehydrogenase"/>
    <property type="match status" value="2"/>
</dbReference>
<dbReference type="InterPro" id="IPR020472">
    <property type="entry name" value="G-protein_beta_WD-40_rep"/>
</dbReference>
<dbReference type="InterPro" id="IPR051865">
    <property type="entry name" value="WD-repeat_CDT2_adapter"/>
</dbReference>
<dbReference type="InterPro" id="IPR015943">
    <property type="entry name" value="WD40/YVTN_repeat-like_dom_sf"/>
</dbReference>
<dbReference type="InterPro" id="IPR019775">
    <property type="entry name" value="WD40_repeat_CS"/>
</dbReference>
<dbReference type="InterPro" id="IPR036322">
    <property type="entry name" value="WD40_repeat_dom_sf"/>
</dbReference>
<dbReference type="InterPro" id="IPR001680">
    <property type="entry name" value="WD40_rpt"/>
</dbReference>
<dbReference type="PANTHER" id="PTHR22852:SF0">
    <property type="entry name" value="DENTICLELESS PROTEIN HOMOLOG"/>
    <property type="match status" value="1"/>
</dbReference>
<dbReference type="PANTHER" id="PTHR22852">
    <property type="entry name" value="LETHAL 2 DENTICLELESS PROTEIN RETINOIC ACID-REGULATED NUCLEAR MATRIX-ASSOCIATED PROTEIN"/>
    <property type="match status" value="1"/>
</dbReference>
<dbReference type="Pfam" id="PF00400">
    <property type="entry name" value="WD40"/>
    <property type="match status" value="4"/>
</dbReference>
<dbReference type="PRINTS" id="PR00320">
    <property type="entry name" value="GPROTEINBRPT"/>
</dbReference>
<dbReference type="SMART" id="SM00320">
    <property type="entry name" value="WD40"/>
    <property type="match status" value="5"/>
</dbReference>
<dbReference type="SUPFAM" id="SSF50978">
    <property type="entry name" value="WD40 repeat-like"/>
    <property type="match status" value="1"/>
</dbReference>
<dbReference type="PROSITE" id="PS00678">
    <property type="entry name" value="WD_REPEATS_1"/>
    <property type="match status" value="2"/>
</dbReference>
<dbReference type="PROSITE" id="PS50082">
    <property type="entry name" value="WD_REPEATS_2"/>
    <property type="match status" value="4"/>
</dbReference>
<dbReference type="PROSITE" id="PS50294">
    <property type="entry name" value="WD_REPEATS_REGION"/>
    <property type="match status" value="1"/>
</dbReference>